<comment type="function">
    <text evidence="1">Specifically methylates the pseudouridine at position 1915 (m3Psi1915) in 23S rRNA.</text>
</comment>
<comment type="catalytic activity">
    <reaction evidence="1">
        <text>pseudouridine(1915) in 23S rRNA + S-adenosyl-L-methionine = N(3)-methylpseudouridine(1915) in 23S rRNA + S-adenosyl-L-homocysteine + H(+)</text>
        <dbReference type="Rhea" id="RHEA:42752"/>
        <dbReference type="Rhea" id="RHEA-COMP:10221"/>
        <dbReference type="Rhea" id="RHEA-COMP:10222"/>
        <dbReference type="ChEBI" id="CHEBI:15378"/>
        <dbReference type="ChEBI" id="CHEBI:57856"/>
        <dbReference type="ChEBI" id="CHEBI:59789"/>
        <dbReference type="ChEBI" id="CHEBI:65314"/>
        <dbReference type="ChEBI" id="CHEBI:74486"/>
        <dbReference type="EC" id="2.1.1.177"/>
    </reaction>
</comment>
<comment type="subunit">
    <text evidence="1">Homodimer.</text>
</comment>
<comment type="subcellular location">
    <subcellularLocation>
        <location evidence="1">Cytoplasm</location>
    </subcellularLocation>
</comment>
<comment type="similarity">
    <text evidence="1">Belongs to the RNA methyltransferase RlmH family.</text>
</comment>
<reference key="1">
    <citation type="submission" date="2003-06" db="EMBL/GenBank/DDBJ databases">
        <title>The complete genome sequence of Haemophilus ducreyi.</title>
        <authorList>
            <person name="Munson R.S. Jr."/>
            <person name="Ray W.C."/>
            <person name="Mahairas G."/>
            <person name="Sabo P."/>
            <person name="Mungur R."/>
            <person name="Johnson L."/>
            <person name="Nguyen D."/>
            <person name="Wang J."/>
            <person name="Forst C."/>
            <person name="Hood L."/>
        </authorList>
    </citation>
    <scope>NUCLEOTIDE SEQUENCE [LARGE SCALE GENOMIC DNA]</scope>
    <source>
        <strain>35000HP / ATCC 700724</strain>
    </source>
</reference>
<protein>
    <recommendedName>
        <fullName evidence="1">Ribosomal RNA large subunit methyltransferase H</fullName>
        <ecNumber evidence="1">2.1.1.177</ecNumber>
    </recommendedName>
    <alternativeName>
        <fullName evidence="1">23S rRNA (pseudouridine1915-N3)-methyltransferase</fullName>
    </alternativeName>
    <alternativeName>
        <fullName evidence="1">23S rRNA m3Psi1915 methyltransferase</fullName>
    </alternativeName>
    <alternativeName>
        <fullName evidence="1">rRNA (pseudouridine-N3-)-methyltransferase RlmH</fullName>
    </alternativeName>
</protein>
<sequence length="155" mass="17324">MKIQLIAVGTKMPVWVKNGFEEYQRRFPKDMPFELIEIAAGKLGKNADIKRILEQEGKAMLAAAGKAKIVSLDIPGKPWTTEQLATQLESWKSDGRDICLLIGGPEGLSTECKQAAEQSWSLSPLTLPHPLVRVIVAESLYRAWSLTTNHPYHRE</sequence>
<proteinExistence type="inferred from homology"/>
<organism>
    <name type="scientific">Haemophilus ducreyi (strain 35000HP / ATCC 700724)</name>
    <dbReference type="NCBI Taxonomy" id="233412"/>
    <lineage>
        <taxon>Bacteria</taxon>
        <taxon>Pseudomonadati</taxon>
        <taxon>Pseudomonadota</taxon>
        <taxon>Gammaproteobacteria</taxon>
        <taxon>Pasteurellales</taxon>
        <taxon>Pasteurellaceae</taxon>
        <taxon>Haemophilus</taxon>
    </lineage>
</organism>
<evidence type="ECO:0000255" key="1">
    <source>
        <dbReference type="HAMAP-Rule" id="MF_00658"/>
    </source>
</evidence>
<name>RLMH_HAEDU</name>
<dbReference type="EC" id="2.1.1.177" evidence="1"/>
<dbReference type="EMBL" id="AE017143">
    <property type="protein sequence ID" value="AAP96729.1"/>
    <property type="molecule type" value="Genomic_DNA"/>
</dbReference>
<dbReference type="RefSeq" id="WP_010945750.1">
    <property type="nucleotide sequence ID" value="NC_002940.2"/>
</dbReference>
<dbReference type="SMR" id="Q7VKA3"/>
<dbReference type="STRING" id="233412.HD_2022"/>
<dbReference type="KEGG" id="hdu:HD_2022"/>
<dbReference type="eggNOG" id="COG1576">
    <property type="taxonomic scope" value="Bacteria"/>
</dbReference>
<dbReference type="HOGENOM" id="CLU_100552_1_0_6"/>
<dbReference type="OrthoDB" id="9806643at2"/>
<dbReference type="Proteomes" id="UP000001022">
    <property type="component" value="Chromosome"/>
</dbReference>
<dbReference type="GO" id="GO:0005737">
    <property type="term" value="C:cytoplasm"/>
    <property type="evidence" value="ECO:0007669"/>
    <property type="project" value="UniProtKB-SubCell"/>
</dbReference>
<dbReference type="GO" id="GO:0070038">
    <property type="term" value="F:rRNA (pseudouridine-N3-)-methyltransferase activity"/>
    <property type="evidence" value="ECO:0007669"/>
    <property type="project" value="UniProtKB-UniRule"/>
</dbReference>
<dbReference type="CDD" id="cd18081">
    <property type="entry name" value="RlmH-like"/>
    <property type="match status" value="1"/>
</dbReference>
<dbReference type="Gene3D" id="3.40.1280.10">
    <property type="match status" value="1"/>
</dbReference>
<dbReference type="HAMAP" id="MF_00658">
    <property type="entry name" value="23SrRNA_methyltr_H"/>
    <property type="match status" value="1"/>
</dbReference>
<dbReference type="InterPro" id="IPR029028">
    <property type="entry name" value="Alpha/beta_knot_MTases"/>
</dbReference>
<dbReference type="InterPro" id="IPR003742">
    <property type="entry name" value="RlmH-like"/>
</dbReference>
<dbReference type="InterPro" id="IPR029026">
    <property type="entry name" value="tRNA_m1G_MTases_N"/>
</dbReference>
<dbReference type="NCBIfam" id="NF000984">
    <property type="entry name" value="PRK00103.1-1"/>
    <property type="match status" value="1"/>
</dbReference>
<dbReference type="NCBIfam" id="NF000986">
    <property type="entry name" value="PRK00103.1-4"/>
    <property type="match status" value="1"/>
</dbReference>
<dbReference type="NCBIfam" id="TIGR00246">
    <property type="entry name" value="tRNA_RlmH_YbeA"/>
    <property type="match status" value="1"/>
</dbReference>
<dbReference type="PANTHER" id="PTHR33603">
    <property type="entry name" value="METHYLTRANSFERASE"/>
    <property type="match status" value="1"/>
</dbReference>
<dbReference type="PANTHER" id="PTHR33603:SF1">
    <property type="entry name" value="RIBOSOMAL RNA LARGE SUBUNIT METHYLTRANSFERASE H"/>
    <property type="match status" value="1"/>
</dbReference>
<dbReference type="Pfam" id="PF02590">
    <property type="entry name" value="SPOUT_MTase"/>
    <property type="match status" value="1"/>
</dbReference>
<dbReference type="PIRSF" id="PIRSF004505">
    <property type="entry name" value="MT_bac"/>
    <property type="match status" value="1"/>
</dbReference>
<dbReference type="SUPFAM" id="SSF75217">
    <property type="entry name" value="alpha/beta knot"/>
    <property type="match status" value="1"/>
</dbReference>
<accession>Q7VKA3</accession>
<gene>
    <name evidence="1" type="primary">rlmH</name>
    <name type="ordered locus">HD_2022</name>
</gene>
<feature type="chain" id="PRO_0000198125" description="Ribosomal RNA large subunit methyltransferase H">
    <location>
        <begin position="1"/>
        <end position="155"/>
    </location>
</feature>
<feature type="binding site" evidence="1">
    <location>
        <position position="72"/>
    </location>
    <ligand>
        <name>S-adenosyl-L-methionine</name>
        <dbReference type="ChEBI" id="CHEBI:59789"/>
    </ligand>
</feature>
<feature type="binding site" evidence="1">
    <location>
        <position position="103"/>
    </location>
    <ligand>
        <name>S-adenosyl-L-methionine</name>
        <dbReference type="ChEBI" id="CHEBI:59789"/>
    </ligand>
</feature>
<feature type="binding site" evidence="1">
    <location>
        <begin position="122"/>
        <end position="127"/>
    </location>
    <ligand>
        <name>S-adenosyl-L-methionine</name>
        <dbReference type="ChEBI" id="CHEBI:59789"/>
    </ligand>
</feature>
<keyword id="KW-0963">Cytoplasm</keyword>
<keyword id="KW-0489">Methyltransferase</keyword>
<keyword id="KW-1185">Reference proteome</keyword>
<keyword id="KW-0698">rRNA processing</keyword>
<keyword id="KW-0949">S-adenosyl-L-methionine</keyword>
<keyword id="KW-0808">Transferase</keyword>